<accession>A3QJR1</accession>
<comment type="function">
    <text evidence="1">Produces ATP from ADP in the presence of a proton gradient across the membrane. The gamma chain is believed to be important in regulating ATPase activity and the flow of protons through the CF(0) complex.</text>
</comment>
<comment type="subunit">
    <text evidence="1">F-type ATPases have 2 components, CF(1) - the catalytic core - and CF(0) - the membrane proton channel. CF(1) has five subunits: alpha(3), beta(3), gamma(1), delta(1), epsilon(1). CF(0) has three main subunits: a, b and c.</text>
</comment>
<comment type="subcellular location">
    <subcellularLocation>
        <location evidence="1">Cell inner membrane</location>
        <topology evidence="1">Peripheral membrane protein</topology>
    </subcellularLocation>
</comment>
<comment type="similarity">
    <text evidence="1">Belongs to the ATPase gamma chain family.</text>
</comment>
<feature type="chain" id="PRO_1000053329" description="ATP synthase gamma chain">
    <location>
        <begin position="1"/>
        <end position="286"/>
    </location>
</feature>
<organism>
    <name type="scientific">Shewanella loihica (strain ATCC BAA-1088 / PV-4)</name>
    <dbReference type="NCBI Taxonomy" id="323850"/>
    <lineage>
        <taxon>Bacteria</taxon>
        <taxon>Pseudomonadati</taxon>
        <taxon>Pseudomonadota</taxon>
        <taxon>Gammaproteobacteria</taxon>
        <taxon>Alteromonadales</taxon>
        <taxon>Shewanellaceae</taxon>
        <taxon>Shewanella</taxon>
    </lineage>
</organism>
<name>ATPG_SHELP</name>
<gene>
    <name evidence="1" type="primary">atpG</name>
    <name type="ordered locus">Shew_3846</name>
</gene>
<keyword id="KW-0066">ATP synthesis</keyword>
<keyword id="KW-0997">Cell inner membrane</keyword>
<keyword id="KW-1003">Cell membrane</keyword>
<keyword id="KW-0139">CF(1)</keyword>
<keyword id="KW-0375">Hydrogen ion transport</keyword>
<keyword id="KW-0406">Ion transport</keyword>
<keyword id="KW-0472">Membrane</keyword>
<keyword id="KW-1185">Reference proteome</keyword>
<keyword id="KW-0813">Transport</keyword>
<sequence>MAGAKEIKTKIASVQNTQKITSAMEMVAASKMRKAQDRMAASRPYAENMRKVIGHVAQGSLEYKHPYLEVREAKRVGYIVVSTDRGLCGGLNVNLFKKVVADVKKQREAGAEVEFCPIGARSVQFFNSFGGKVSAHASGLGDAPKLADLIGTVRVMLKAYNEGTLDRLYVVFNKFVNTMSQTPVIEQLLPLPKSEEDEISHHWDYLYEPDPKELLETLLVRYVESQVYQGVVENIASEQAARMVAMKAATDNAGELIDDLQLVYNKARQAAITQELSEIVSGAAAV</sequence>
<reference key="1">
    <citation type="submission" date="2007-03" db="EMBL/GenBank/DDBJ databases">
        <title>Complete sequence of Shewanella loihica PV-4.</title>
        <authorList>
            <consortium name="US DOE Joint Genome Institute"/>
            <person name="Copeland A."/>
            <person name="Lucas S."/>
            <person name="Lapidus A."/>
            <person name="Barry K."/>
            <person name="Detter J.C."/>
            <person name="Glavina del Rio T."/>
            <person name="Hammon N."/>
            <person name="Israni S."/>
            <person name="Dalin E."/>
            <person name="Tice H."/>
            <person name="Pitluck S."/>
            <person name="Chain P."/>
            <person name="Malfatti S."/>
            <person name="Shin M."/>
            <person name="Vergez L."/>
            <person name="Schmutz J."/>
            <person name="Larimer F."/>
            <person name="Land M."/>
            <person name="Hauser L."/>
            <person name="Kyrpides N."/>
            <person name="Mikhailova N."/>
            <person name="Romine M.F."/>
            <person name="Serres G."/>
            <person name="Fredrickson J."/>
            <person name="Tiedje J."/>
            <person name="Richardson P."/>
        </authorList>
    </citation>
    <scope>NUCLEOTIDE SEQUENCE [LARGE SCALE GENOMIC DNA]</scope>
    <source>
        <strain>ATCC BAA-1088 / PV-4</strain>
    </source>
</reference>
<evidence type="ECO:0000255" key="1">
    <source>
        <dbReference type="HAMAP-Rule" id="MF_00815"/>
    </source>
</evidence>
<proteinExistence type="inferred from homology"/>
<dbReference type="EMBL" id="CP000606">
    <property type="protein sequence ID" value="ABO25709.1"/>
    <property type="molecule type" value="Genomic_DNA"/>
</dbReference>
<dbReference type="RefSeq" id="WP_011867637.1">
    <property type="nucleotide sequence ID" value="NC_009092.1"/>
</dbReference>
<dbReference type="SMR" id="A3QJR1"/>
<dbReference type="STRING" id="323850.Shew_3846"/>
<dbReference type="KEGG" id="slo:Shew_3846"/>
<dbReference type="eggNOG" id="COG0224">
    <property type="taxonomic scope" value="Bacteria"/>
</dbReference>
<dbReference type="HOGENOM" id="CLU_050669_0_1_6"/>
<dbReference type="OrthoDB" id="9812769at2"/>
<dbReference type="Proteomes" id="UP000001558">
    <property type="component" value="Chromosome"/>
</dbReference>
<dbReference type="GO" id="GO:0005886">
    <property type="term" value="C:plasma membrane"/>
    <property type="evidence" value="ECO:0007669"/>
    <property type="project" value="UniProtKB-SubCell"/>
</dbReference>
<dbReference type="GO" id="GO:0045259">
    <property type="term" value="C:proton-transporting ATP synthase complex"/>
    <property type="evidence" value="ECO:0007669"/>
    <property type="project" value="UniProtKB-KW"/>
</dbReference>
<dbReference type="GO" id="GO:0005524">
    <property type="term" value="F:ATP binding"/>
    <property type="evidence" value="ECO:0007669"/>
    <property type="project" value="UniProtKB-UniRule"/>
</dbReference>
<dbReference type="GO" id="GO:0046933">
    <property type="term" value="F:proton-transporting ATP synthase activity, rotational mechanism"/>
    <property type="evidence" value="ECO:0007669"/>
    <property type="project" value="UniProtKB-UniRule"/>
</dbReference>
<dbReference type="GO" id="GO:0042777">
    <property type="term" value="P:proton motive force-driven plasma membrane ATP synthesis"/>
    <property type="evidence" value="ECO:0007669"/>
    <property type="project" value="UniProtKB-UniRule"/>
</dbReference>
<dbReference type="CDD" id="cd12151">
    <property type="entry name" value="F1-ATPase_gamma"/>
    <property type="match status" value="1"/>
</dbReference>
<dbReference type="FunFam" id="1.10.287.80:FF:000005">
    <property type="entry name" value="ATP synthase gamma chain"/>
    <property type="match status" value="2"/>
</dbReference>
<dbReference type="FunFam" id="3.40.1380.10:FF:000001">
    <property type="entry name" value="ATP synthase gamma chain"/>
    <property type="match status" value="1"/>
</dbReference>
<dbReference type="Gene3D" id="3.40.1380.10">
    <property type="match status" value="1"/>
</dbReference>
<dbReference type="Gene3D" id="1.10.287.80">
    <property type="entry name" value="ATP synthase, gamma subunit, helix hairpin domain"/>
    <property type="match status" value="1"/>
</dbReference>
<dbReference type="HAMAP" id="MF_00815">
    <property type="entry name" value="ATP_synth_gamma_bact"/>
    <property type="match status" value="1"/>
</dbReference>
<dbReference type="InterPro" id="IPR035968">
    <property type="entry name" value="ATP_synth_F1_ATPase_gsu"/>
</dbReference>
<dbReference type="InterPro" id="IPR000131">
    <property type="entry name" value="ATP_synth_F1_gsu"/>
</dbReference>
<dbReference type="InterPro" id="IPR023632">
    <property type="entry name" value="ATP_synth_F1_gsu_CS"/>
</dbReference>
<dbReference type="NCBIfam" id="TIGR01146">
    <property type="entry name" value="ATPsyn_F1gamma"/>
    <property type="match status" value="1"/>
</dbReference>
<dbReference type="NCBIfam" id="NF004144">
    <property type="entry name" value="PRK05621.1-1"/>
    <property type="match status" value="1"/>
</dbReference>
<dbReference type="PANTHER" id="PTHR11693">
    <property type="entry name" value="ATP SYNTHASE GAMMA CHAIN"/>
    <property type="match status" value="1"/>
</dbReference>
<dbReference type="PANTHER" id="PTHR11693:SF22">
    <property type="entry name" value="ATP SYNTHASE SUBUNIT GAMMA, MITOCHONDRIAL"/>
    <property type="match status" value="1"/>
</dbReference>
<dbReference type="Pfam" id="PF00231">
    <property type="entry name" value="ATP-synt"/>
    <property type="match status" value="1"/>
</dbReference>
<dbReference type="PRINTS" id="PR00126">
    <property type="entry name" value="ATPASEGAMMA"/>
</dbReference>
<dbReference type="SUPFAM" id="SSF52943">
    <property type="entry name" value="ATP synthase (F1-ATPase), gamma subunit"/>
    <property type="match status" value="1"/>
</dbReference>
<dbReference type="PROSITE" id="PS00153">
    <property type="entry name" value="ATPASE_GAMMA"/>
    <property type="match status" value="1"/>
</dbReference>
<protein>
    <recommendedName>
        <fullName evidence="1">ATP synthase gamma chain</fullName>
    </recommendedName>
    <alternativeName>
        <fullName evidence="1">ATP synthase F1 sector gamma subunit</fullName>
    </alternativeName>
    <alternativeName>
        <fullName evidence="1">F-ATPase gamma subunit</fullName>
    </alternativeName>
</protein>